<feature type="chain" id="PRO_1000048329" description="Glutaminase">
    <location>
        <begin position="1"/>
        <end position="325"/>
    </location>
</feature>
<feature type="binding site" evidence="1">
    <location>
        <position position="76"/>
    </location>
    <ligand>
        <name>substrate</name>
    </ligand>
</feature>
<feature type="binding site" evidence="1">
    <location>
        <position position="125"/>
    </location>
    <ligand>
        <name>substrate</name>
    </ligand>
</feature>
<feature type="binding site" evidence="1">
    <location>
        <position position="169"/>
    </location>
    <ligand>
        <name>substrate</name>
    </ligand>
</feature>
<feature type="binding site" evidence="1">
    <location>
        <position position="176"/>
    </location>
    <ligand>
        <name>substrate</name>
    </ligand>
</feature>
<feature type="binding site" evidence="1">
    <location>
        <position position="200"/>
    </location>
    <ligand>
        <name>substrate</name>
    </ligand>
</feature>
<feature type="binding site" evidence="1">
    <location>
        <position position="252"/>
    </location>
    <ligand>
        <name>substrate</name>
    </ligand>
</feature>
<feature type="binding site" evidence="1">
    <location>
        <position position="270"/>
    </location>
    <ligand>
        <name>substrate</name>
    </ligand>
</feature>
<protein>
    <recommendedName>
        <fullName evidence="1">Glutaminase</fullName>
        <ecNumber evidence="1">3.5.1.2</ecNumber>
    </recommendedName>
</protein>
<organism>
    <name type="scientific">Clavibacter michiganensis subsp. michiganensis (strain NCPPB 382)</name>
    <dbReference type="NCBI Taxonomy" id="443906"/>
    <lineage>
        <taxon>Bacteria</taxon>
        <taxon>Bacillati</taxon>
        <taxon>Actinomycetota</taxon>
        <taxon>Actinomycetes</taxon>
        <taxon>Micrococcales</taxon>
        <taxon>Microbacteriaceae</taxon>
        <taxon>Clavibacter</taxon>
    </lineage>
</organism>
<accession>A5CLW1</accession>
<keyword id="KW-0378">Hydrolase</keyword>
<name>GLSA_CLAM3</name>
<sequence>MTAPGSASHDAAHDPAHALDLDRLLASAADDGGGQVDDSIPQLAETDPSLAGIALVTPDGRTHAAGDSAHAFSIQSAVKPFLFALALADTDGAALDAVGIEPTGEAFDAIKLESGTGRPPNPMVNAGAILTASLVRGSTLEERTARILAGLSAFAGRDLEVDEDVAECEQLLGDRNHALAHLMRSEGTLHVSADDAVAAYARACAVLVTPEILAAMGATLACGGRNPLTGSRVVSREVARDSVSVMATCGVYDGSGRWMRRVGVPAKSSVSGAIVLASPGRLGAAVFSPPLDDQGTSVRGAVLAQRLADELGLHAFGGTGGRERA</sequence>
<reference key="1">
    <citation type="journal article" date="2008" name="J. Bacteriol.">
        <title>The genome sequence of the tomato-pathogenic actinomycete Clavibacter michiganensis subsp. michiganensis NCPPB382 reveals a large island involved in pathogenicity.</title>
        <authorList>
            <person name="Gartemann K.-H."/>
            <person name="Abt B."/>
            <person name="Bekel T."/>
            <person name="Burger A."/>
            <person name="Engemann J."/>
            <person name="Fluegel M."/>
            <person name="Gaigalat L."/>
            <person name="Goesmann A."/>
            <person name="Graefen I."/>
            <person name="Kalinowski J."/>
            <person name="Kaup O."/>
            <person name="Kirchner O."/>
            <person name="Krause L."/>
            <person name="Linke B."/>
            <person name="McHardy A."/>
            <person name="Meyer F."/>
            <person name="Pohle S."/>
            <person name="Rueckert C."/>
            <person name="Schneiker S."/>
            <person name="Zellermann E.-M."/>
            <person name="Puehler A."/>
            <person name="Eichenlaub R."/>
            <person name="Kaiser O."/>
            <person name="Bartels D."/>
        </authorList>
    </citation>
    <scope>NUCLEOTIDE SEQUENCE [LARGE SCALE GENOMIC DNA]</scope>
    <source>
        <strain>NCPPB 382</strain>
    </source>
</reference>
<comment type="catalytic activity">
    <reaction evidence="1">
        <text>L-glutamine + H2O = L-glutamate + NH4(+)</text>
        <dbReference type="Rhea" id="RHEA:15889"/>
        <dbReference type="ChEBI" id="CHEBI:15377"/>
        <dbReference type="ChEBI" id="CHEBI:28938"/>
        <dbReference type="ChEBI" id="CHEBI:29985"/>
        <dbReference type="ChEBI" id="CHEBI:58359"/>
        <dbReference type="EC" id="3.5.1.2"/>
    </reaction>
</comment>
<comment type="subunit">
    <text evidence="1">Homotetramer.</text>
</comment>
<comment type="similarity">
    <text evidence="1">Belongs to the glutaminase family.</text>
</comment>
<gene>
    <name evidence="1" type="primary">glsA</name>
    <name type="ordered locus">CMM_0029</name>
</gene>
<evidence type="ECO:0000255" key="1">
    <source>
        <dbReference type="HAMAP-Rule" id="MF_00313"/>
    </source>
</evidence>
<dbReference type="EC" id="3.5.1.2" evidence="1"/>
<dbReference type="EMBL" id="AM711867">
    <property type="protein sequence ID" value="CAN00036.1"/>
    <property type="molecule type" value="Genomic_DNA"/>
</dbReference>
<dbReference type="RefSeq" id="WP_011931248.1">
    <property type="nucleotide sequence ID" value="NC_009480.1"/>
</dbReference>
<dbReference type="SMR" id="A5CLW1"/>
<dbReference type="KEGG" id="cmi:CMM_0029"/>
<dbReference type="eggNOG" id="COG2066">
    <property type="taxonomic scope" value="Bacteria"/>
</dbReference>
<dbReference type="HOGENOM" id="CLU_027932_1_0_11"/>
<dbReference type="OrthoDB" id="9788822at2"/>
<dbReference type="Proteomes" id="UP000001564">
    <property type="component" value="Chromosome"/>
</dbReference>
<dbReference type="GO" id="GO:0004359">
    <property type="term" value="F:glutaminase activity"/>
    <property type="evidence" value="ECO:0007669"/>
    <property type="project" value="UniProtKB-UniRule"/>
</dbReference>
<dbReference type="GO" id="GO:0006537">
    <property type="term" value="P:glutamate biosynthetic process"/>
    <property type="evidence" value="ECO:0007669"/>
    <property type="project" value="TreeGrafter"/>
</dbReference>
<dbReference type="GO" id="GO:0006543">
    <property type="term" value="P:glutamine catabolic process"/>
    <property type="evidence" value="ECO:0007669"/>
    <property type="project" value="TreeGrafter"/>
</dbReference>
<dbReference type="Gene3D" id="3.40.710.10">
    <property type="entry name" value="DD-peptidase/beta-lactamase superfamily"/>
    <property type="match status" value="1"/>
</dbReference>
<dbReference type="HAMAP" id="MF_00313">
    <property type="entry name" value="Glutaminase"/>
    <property type="match status" value="1"/>
</dbReference>
<dbReference type="InterPro" id="IPR012338">
    <property type="entry name" value="Beta-lactam/transpept-like"/>
</dbReference>
<dbReference type="InterPro" id="IPR015868">
    <property type="entry name" value="Glutaminase"/>
</dbReference>
<dbReference type="NCBIfam" id="TIGR03814">
    <property type="entry name" value="Gln_ase"/>
    <property type="match status" value="1"/>
</dbReference>
<dbReference type="PANTHER" id="PTHR12544">
    <property type="entry name" value="GLUTAMINASE"/>
    <property type="match status" value="1"/>
</dbReference>
<dbReference type="PANTHER" id="PTHR12544:SF29">
    <property type="entry name" value="GLUTAMINASE"/>
    <property type="match status" value="1"/>
</dbReference>
<dbReference type="Pfam" id="PF04960">
    <property type="entry name" value="Glutaminase"/>
    <property type="match status" value="1"/>
</dbReference>
<dbReference type="SUPFAM" id="SSF56601">
    <property type="entry name" value="beta-lactamase/transpeptidase-like"/>
    <property type="match status" value="1"/>
</dbReference>
<proteinExistence type="inferred from homology"/>